<name>NUSB_ALIFM</name>
<gene>
    <name evidence="1" type="primary">nusB</name>
    <name type="ordered locus">VFMJ11_0724</name>
</gene>
<accession>B5FBF9</accession>
<keyword id="KW-0694">RNA-binding</keyword>
<keyword id="KW-0804">Transcription</keyword>
<keyword id="KW-0889">Transcription antitermination</keyword>
<keyword id="KW-0805">Transcription regulation</keyword>
<protein>
    <recommendedName>
        <fullName evidence="1">Transcription antitermination protein NusB</fullName>
    </recommendedName>
    <alternativeName>
        <fullName evidence="1">Antitermination factor NusB</fullName>
    </alternativeName>
</protein>
<dbReference type="EMBL" id="CP001139">
    <property type="protein sequence ID" value="ACH66413.1"/>
    <property type="molecule type" value="Genomic_DNA"/>
</dbReference>
<dbReference type="RefSeq" id="WP_005418093.1">
    <property type="nucleotide sequence ID" value="NC_011184.1"/>
</dbReference>
<dbReference type="SMR" id="B5FBF9"/>
<dbReference type="GeneID" id="54163359"/>
<dbReference type="KEGG" id="vfm:VFMJ11_0724"/>
<dbReference type="HOGENOM" id="CLU_087843_4_1_6"/>
<dbReference type="Proteomes" id="UP000001857">
    <property type="component" value="Chromosome I"/>
</dbReference>
<dbReference type="GO" id="GO:0005829">
    <property type="term" value="C:cytosol"/>
    <property type="evidence" value="ECO:0007669"/>
    <property type="project" value="TreeGrafter"/>
</dbReference>
<dbReference type="GO" id="GO:0003723">
    <property type="term" value="F:RNA binding"/>
    <property type="evidence" value="ECO:0007669"/>
    <property type="project" value="UniProtKB-UniRule"/>
</dbReference>
<dbReference type="GO" id="GO:0006353">
    <property type="term" value="P:DNA-templated transcription termination"/>
    <property type="evidence" value="ECO:0007669"/>
    <property type="project" value="UniProtKB-UniRule"/>
</dbReference>
<dbReference type="GO" id="GO:0031564">
    <property type="term" value="P:transcription antitermination"/>
    <property type="evidence" value="ECO:0007669"/>
    <property type="project" value="UniProtKB-KW"/>
</dbReference>
<dbReference type="FunFam" id="1.10.940.10:FF:000001">
    <property type="entry name" value="Transcription antitermination factor NusB"/>
    <property type="match status" value="1"/>
</dbReference>
<dbReference type="Gene3D" id="1.10.940.10">
    <property type="entry name" value="NusB-like"/>
    <property type="match status" value="1"/>
</dbReference>
<dbReference type="HAMAP" id="MF_00073">
    <property type="entry name" value="NusB"/>
    <property type="match status" value="1"/>
</dbReference>
<dbReference type="InterPro" id="IPR035926">
    <property type="entry name" value="NusB-like_sf"/>
</dbReference>
<dbReference type="InterPro" id="IPR011605">
    <property type="entry name" value="NusB_fam"/>
</dbReference>
<dbReference type="InterPro" id="IPR006027">
    <property type="entry name" value="NusB_RsmB_TIM44"/>
</dbReference>
<dbReference type="NCBIfam" id="TIGR01951">
    <property type="entry name" value="nusB"/>
    <property type="match status" value="1"/>
</dbReference>
<dbReference type="PANTHER" id="PTHR11078:SF3">
    <property type="entry name" value="ANTITERMINATION NUSB DOMAIN-CONTAINING PROTEIN"/>
    <property type="match status" value="1"/>
</dbReference>
<dbReference type="PANTHER" id="PTHR11078">
    <property type="entry name" value="N UTILIZATION SUBSTANCE PROTEIN B-RELATED"/>
    <property type="match status" value="1"/>
</dbReference>
<dbReference type="Pfam" id="PF01029">
    <property type="entry name" value="NusB"/>
    <property type="match status" value="1"/>
</dbReference>
<dbReference type="SUPFAM" id="SSF48013">
    <property type="entry name" value="NusB-like"/>
    <property type="match status" value="1"/>
</dbReference>
<sequence length="155" mass="17843">MGVSVKPAARRNARQFALQAIYSWQLSKENVADIEEQFLTAEKYDEEEHHANEPKLQTPETDVAYFRDLFSGVALNHMKLDGKMRPYLSRPLQDLDQMELALLRMSIYEMMNRDDVPYKVVINEAIELAKVFAAEDSHKFVNGVLDKAAPTLRKK</sequence>
<proteinExistence type="inferred from homology"/>
<evidence type="ECO:0000255" key="1">
    <source>
        <dbReference type="HAMAP-Rule" id="MF_00073"/>
    </source>
</evidence>
<feature type="chain" id="PRO_1000092599" description="Transcription antitermination protein NusB">
    <location>
        <begin position="1"/>
        <end position="155"/>
    </location>
</feature>
<comment type="function">
    <text evidence="1">Involved in transcription antitermination. Required for transcription of ribosomal RNA (rRNA) genes. Binds specifically to the boxA antiterminator sequence of the ribosomal RNA (rrn) operons.</text>
</comment>
<comment type="similarity">
    <text evidence="1">Belongs to the NusB family.</text>
</comment>
<reference key="1">
    <citation type="submission" date="2008-08" db="EMBL/GenBank/DDBJ databases">
        <title>Complete sequence of Vibrio fischeri strain MJ11.</title>
        <authorList>
            <person name="Mandel M.J."/>
            <person name="Stabb E.V."/>
            <person name="Ruby E.G."/>
            <person name="Ferriera S."/>
            <person name="Johnson J."/>
            <person name="Kravitz S."/>
            <person name="Beeson K."/>
            <person name="Sutton G."/>
            <person name="Rogers Y.-H."/>
            <person name="Friedman R."/>
            <person name="Frazier M."/>
            <person name="Venter J.C."/>
        </authorList>
    </citation>
    <scope>NUCLEOTIDE SEQUENCE [LARGE SCALE GENOMIC DNA]</scope>
    <source>
        <strain>MJ11</strain>
    </source>
</reference>
<organism>
    <name type="scientific">Aliivibrio fischeri (strain MJ11)</name>
    <name type="common">Vibrio fischeri</name>
    <dbReference type="NCBI Taxonomy" id="388396"/>
    <lineage>
        <taxon>Bacteria</taxon>
        <taxon>Pseudomonadati</taxon>
        <taxon>Pseudomonadota</taxon>
        <taxon>Gammaproteobacteria</taxon>
        <taxon>Vibrionales</taxon>
        <taxon>Vibrionaceae</taxon>
        <taxon>Aliivibrio</taxon>
    </lineage>
</organism>